<gene>
    <name evidence="1" type="primary">prmA</name>
    <name type="ordered locus">CJA_2742</name>
</gene>
<evidence type="ECO:0000255" key="1">
    <source>
        <dbReference type="HAMAP-Rule" id="MF_00735"/>
    </source>
</evidence>
<sequence length="294" mass="32407">MPWLQLKVIAPRRYVESIENALLAAGAASVTLQDNADQPIFEPGLGETPLWDNVKITGLFDAEIDTAKAIALAERRFGNPLPQHQWEQLEDKDWEREWMSNYHAIRCGERLWICPSWQEPPEPDKINLMLDPGLAFGTGTHPTTFLCMQWIDQQDFTDLEVIDYGCGSGILGIAALLLGARKVVGVDIDPQALLATTENAKRNQLPADAMPVYLPPHCPATQVDVMLANILAGPLAELAPTLSNMTKPGGKLCLSGILSVQAQSVMDAYAPWFDFDPVATHEEWVRLTAIKARA</sequence>
<feature type="chain" id="PRO_1000192600" description="Ribosomal protein L11 methyltransferase">
    <location>
        <begin position="1"/>
        <end position="294"/>
    </location>
</feature>
<feature type="binding site" evidence="1">
    <location>
        <position position="144"/>
    </location>
    <ligand>
        <name>S-adenosyl-L-methionine</name>
        <dbReference type="ChEBI" id="CHEBI:59789"/>
    </ligand>
</feature>
<feature type="binding site" evidence="1">
    <location>
        <position position="165"/>
    </location>
    <ligand>
        <name>S-adenosyl-L-methionine</name>
        <dbReference type="ChEBI" id="CHEBI:59789"/>
    </ligand>
</feature>
<feature type="binding site" evidence="1">
    <location>
        <position position="187"/>
    </location>
    <ligand>
        <name>S-adenosyl-L-methionine</name>
        <dbReference type="ChEBI" id="CHEBI:59789"/>
    </ligand>
</feature>
<feature type="binding site" evidence="1">
    <location>
        <position position="229"/>
    </location>
    <ligand>
        <name>S-adenosyl-L-methionine</name>
        <dbReference type="ChEBI" id="CHEBI:59789"/>
    </ligand>
</feature>
<comment type="function">
    <text evidence="1">Methylates ribosomal protein L11.</text>
</comment>
<comment type="catalytic activity">
    <reaction evidence="1">
        <text>L-lysyl-[protein] + 3 S-adenosyl-L-methionine = N(6),N(6),N(6)-trimethyl-L-lysyl-[protein] + 3 S-adenosyl-L-homocysteine + 3 H(+)</text>
        <dbReference type="Rhea" id="RHEA:54192"/>
        <dbReference type="Rhea" id="RHEA-COMP:9752"/>
        <dbReference type="Rhea" id="RHEA-COMP:13826"/>
        <dbReference type="ChEBI" id="CHEBI:15378"/>
        <dbReference type="ChEBI" id="CHEBI:29969"/>
        <dbReference type="ChEBI" id="CHEBI:57856"/>
        <dbReference type="ChEBI" id="CHEBI:59789"/>
        <dbReference type="ChEBI" id="CHEBI:61961"/>
    </reaction>
</comment>
<comment type="subcellular location">
    <subcellularLocation>
        <location evidence="1">Cytoplasm</location>
    </subcellularLocation>
</comment>
<comment type="similarity">
    <text evidence="1">Belongs to the methyltransferase superfamily. PrmA family.</text>
</comment>
<organism>
    <name type="scientific">Cellvibrio japonicus (strain Ueda107)</name>
    <name type="common">Pseudomonas fluorescens subsp. cellulosa</name>
    <dbReference type="NCBI Taxonomy" id="498211"/>
    <lineage>
        <taxon>Bacteria</taxon>
        <taxon>Pseudomonadati</taxon>
        <taxon>Pseudomonadota</taxon>
        <taxon>Gammaproteobacteria</taxon>
        <taxon>Cellvibrionales</taxon>
        <taxon>Cellvibrionaceae</taxon>
        <taxon>Cellvibrio</taxon>
    </lineage>
</organism>
<protein>
    <recommendedName>
        <fullName evidence="1">Ribosomal protein L11 methyltransferase</fullName>
        <shortName evidence="1">L11 Mtase</shortName>
        <ecNumber evidence="1">2.1.1.-</ecNumber>
    </recommendedName>
</protein>
<dbReference type="EC" id="2.1.1.-" evidence="1"/>
<dbReference type="EMBL" id="CP000934">
    <property type="protein sequence ID" value="ACE85647.1"/>
    <property type="molecule type" value="Genomic_DNA"/>
</dbReference>
<dbReference type="RefSeq" id="WP_012488336.1">
    <property type="nucleotide sequence ID" value="NC_010995.1"/>
</dbReference>
<dbReference type="SMR" id="B3PBH5"/>
<dbReference type="STRING" id="498211.CJA_2742"/>
<dbReference type="KEGG" id="cja:CJA_2742"/>
<dbReference type="eggNOG" id="COG2264">
    <property type="taxonomic scope" value="Bacteria"/>
</dbReference>
<dbReference type="HOGENOM" id="CLU_049382_4_1_6"/>
<dbReference type="OrthoDB" id="9785995at2"/>
<dbReference type="Proteomes" id="UP000001036">
    <property type="component" value="Chromosome"/>
</dbReference>
<dbReference type="GO" id="GO:0005829">
    <property type="term" value="C:cytosol"/>
    <property type="evidence" value="ECO:0007669"/>
    <property type="project" value="TreeGrafter"/>
</dbReference>
<dbReference type="GO" id="GO:0016279">
    <property type="term" value="F:protein-lysine N-methyltransferase activity"/>
    <property type="evidence" value="ECO:0007669"/>
    <property type="project" value="TreeGrafter"/>
</dbReference>
<dbReference type="GO" id="GO:0032259">
    <property type="term" value="P:methylation"/>
    <property type="evidence" value="ECO:0007669"/>
    <property type="project" value="UniProtKB-KW"/>
</dbReference>
<dbReference type="CDD" id="cd02440">
    <property type="entry name" value="AdoMet_MTases"/>
    <property type="match status" value="1"/>
</dbReference>
<dbReference type="Gene3D" id="3.40.50.150">
    <property type="entry name" value="Vaccinia Virus protein VP39"/>
    <property type="match status" value="1"/>
</dbReference>
<dbReference type="HAMAP" id="MF_00735">
    <property type="entry name" value="Methyltr_PrmA"/>
    <property type="match status" value="1"/>
</dbReference>
<dbReference type="InterPro" id="IPR050078">
    <property type="entry name" value="Ribosomal_L11_MeTrfase_PrmA"/>
</dbReference>
<dbReference type="InterPro" id="IPR004498">
    <property type="entry name" value="Ribosomal_PrmA_MeTrfase"/>
</dbReference>
<dbReference type="InterPro" id="IPR029063">
    <property type="entry name" value="SAM-dependent_MTases_sf"/>
</dbReference>
<dbReference type="NCBIfam" id="TIGR00406">
    <property type="entry name" value="prmA"/>
    <property type="match status" value="1"/>
</dbReference>
<dbReference type="PANTHER" id="PTHR43648">
    <property type="entry name" value="ELECTRON TRANSFER FLAVOPROTEIN BETA SUBUNIT LYSINE METHYLTRANSFERASE"/>
    <property type="match status" value="1"/>
</dbReference>
<dbReference type="PANTHER" id="PTHR43648:SF1">
    <property type="entry name" value="ELECTRON TRANSFER FLAVOPROTEIN BETA SUBUNIT LYSINE METHYLTRANSFERASE"/>
    <property type="match status" value="1"/>
</dbReference>
<dbReference type="Pfam" id="PF06325">
    <property type="entry name" value="PrmA"/>
    <property type="match status" value="1"/>
</dbReference>
<dbReference type="PIRSF" id="PIRSF000401">
    <property type="entry name" value="RPL11_MTase"/>
    <property type="match status" value="1"/>
</dbReference>
<dbReference type="SUPFAM" id="SSF53335">
    <property type="entry name" value="S-adenosyl-L-methionine-dependent methyltransferases"/>
    <property type="match status" value="1"/>
</dbReference>
<accession>B3PBH5</accession>
<name>PRMA_CELJU</name>
<reference key="1">
    <citation type="journal article" date="2008" name="J. Bacteriol.">
        <title>Insights into plant cell wall degradation from the genome sequence of the soil bacterium Cellvibrio japonicus.</title>
        <authorList>
            <person name="DeBoy R.T."/>
            <person name="Mongodin E.F."/>
            <person name="Fouts D.E."/>
            <person name="Tailford L.E."/>
            <person name="Khouri H."/>
            <person name="Emerson J.B."/>
            <person name="Mohamoud Y."/>
            <person name="Watkins K."/>
            <person name="Henrissat B."/>
            <person name="Gilbert H.J."/>
            <person name="Nelson K.E."/>
        </authorList>
    </citation>
    <scope>NUCLEOTIDE SEQUENCE [LARGE SCALE GENOMIC DNA]</scope>
    <source>
        <strain>Ueda107</strain>
    </source>
</reference>
<proteinExistence type="inferred from homology"/>
<keyword id="KW-0963">Cytoplasm</keyword>
<keyword id="KW-0489">Methyltransferase</keyword>
<keyword id="KW-1185">Reference proteome</keyword>
<keyword id="KW-0949">S-adenosyl-L-methionine</keyword>
<keyword id="KW-0808">Transferase</keyword>